<comment type="function">
    <text evidence="2">Converts O-phosphoseryl-tRNA(Sec) to selenocysteinyl-tRNA(Sec) required for selenoprotein biosynthesis.</text>
</comment>
<comment type="catalytic activity">
    <reaction evidence="2">
        <text>O-phospho-L-seryl-tRNA(Sec) + selenophosphate + H2O = L-selenocysteinyl-tRNA(Sec) + 2 phosphate</text>
        <dbReference type="Rhea" id="RHEA:25041"/>
        <dbReference type="Rhea" id="RHEA-COMP:9743"/>
        <dbReference type="Rhea" id="RHEA-COMP:9947"/>
        <dbReference type="ChEBI" id="CHEBI:15377"/>
        <dbReference type="ChEBI" id="CHEBI:16144"/>
        <dbReference type="ChEBI" id="CHEBI:43474"/>
        <dbReference type="ChEBI" id="CHEBI:78551"/>
        <dbReference type="ChEBI" id="CHEBI:78573"/>
        <dbReference type="EC" id="2.9.1.2"/>
    </reaction>
</comment>
<comment type="cofactor">
    <cofactor evidence="2">
        <name>pyridoxal 5'-phosphate</name>
        <dbReference type="ChEBI" id="CHEBI:597326"/>
    </cofactor>
</comment>
<comment type="pathway">
    <text evidence="2">Aminoacyl-tRNA biosynthesis; selenocysteinyl-tRNA(Sec) biosynthesis; selenocysteinyl-tRNA(Sec) from L-seryl-tRNA(Sec) (archaeal/eukaryal route): step 2/2.</text>
</comment>
<comment type="subunit">
    <text evidence="2">Homotetramer formed by a catalytic dimer and a non-catalytic dimer serving as a binding platform that orients tRNASec for catalysis. Each tetramer binds the CCA ends of two tRNAs which point to the active sites of the catalytic dimer.</text>
</comment>
<comment type="subcellular location">
    <subcellularLocation>
        <location evidence="2">Cytoplasm</location>
    </subcellularLocation>
</comment>
<comment type="similarity">
    <text evidence="4">Belongs to the SepSecS family.</text>
</comment>
<keyword id="KW-0963">Cytoplasm</keyword>
<keyword id="KW-0648">Protein biosynthesis</keyword>
<keyword id="KW-0663">Pyridoxal phosphate</keyword>
<keyword id="KW-1185">Reference proteome</keyword>
<keyword id="KW-0694">RNA-binding</keyword>
<keyword id="KW-0711">Selenium</keyword>
<keyword id="KW-0808">Transferase</keyword>
<keyword id="KW-0820">tRNA-binding</keyword>
<sequence length="490" mass="53730">MNSENFRLSEKLVSASYVRQGLDARRGHEQLIRRLLDQGKCPEEGWSESTIELFLNELAVMDSNNFLGNCGVGEREGRVASSLVARRHYRLIHGIGRSGDIAAVQPKAAGSSLLNKITNSVVLDVLKLTGVRSVSSCFVVPMATGMSLTLCFLTLRHRRPKARYILWPRIDQKSCFKSMVTAGFEPVVIENVLEGDELRTNLEEVERKIEEFGAENTLCVHSTTSCFAPRVPDRLEELSVLCAKHDIPHIVNNAYGVQPSKCMHLIQQGARVGRIDAFVQSLDKNFVVPVGGAIIAGFDENFIQEISKIYPGRASASPSLDVLITLLTLGANGYKKLLADRKELYGHLAQELSALAARHGERLLKTPHNPISLAMSLNHLEAHSSSAVTQLGSMLFTRQVSGARVVPLGVQQTVSGHTFSGFMSHSEAYPCPYLNAASAIGITKGDVTVCMKRLGKCLKILKKEKSDPADLEAEDGELEESPQRSTELRV</sequence>
<evidence type="ECO:0000250" key="1">
    <source>
        <dbReference type="UniProtKB" id="Q6P6M7"/>
    </source>
</evidence>
<evidence type="ECO:0000250" key="2">
    <source>
        <dbReference type="UniProtKB" id="Q9HD40"/>
    </source>
</evidence>
<evidence type="ECO:0000256" key="3">
    <source>
        <dbReference type="SAM" id="MobiDB-lite"/>
    </source>
</evidence>
<evidence type="ECO:0000305" key="4"/>
<organism>
    <name type="scientific">Danio rerio</name>
    <name type="common">Zebrafish</name>
    <name type="synonym">Brachydanio rerio</name>
    <dbReference type="NCBI Taxonomy" id="7955"/>
    <lineage>
        <taxon>Eukaryota</taxon>
        <taxon>Metazoa</taxon>
        <taxon>Chordata</taxon>
        <taxon>Craniata</taxon>
        <taxon>Vertebrata</taxon>
        <taxon>Euteleostomi</taxon>
        <taxon>Actinopterygii</taxon>
        <taxon>Neopterygii</taxon>
        <taxon>Teleostei</taxon>
        <taxon>Ostariophysi</taxon>
        <taxon>Cypriniformes</taxon>
        <taxon>Danionidae</taxon>
        <taxon>Danioninae</taxon>
        <taxon>Danio</taxon>
    </lineage>
</organism>
<proteinExistence type="evidence at transcript level"/>
<protein>
    <recommendedName>
        <fullName>O-phosphoseryl-tRNA(Sec) selenium transferase</fullName>
        <ecNumber evidence="2">2.9.1.2</ecNumber>
    </recommendedName>
    <alternativeName>
        <fullName>Selenocysteine synthase</fullName>
        <shortName>Sec synthase</shortName>
    </alternativeName>
    <alternativeName>
        <fullName>Selenocysteinyl-tRNA(Sec) synthase</fullName>
    </alternativeName>
    <alternativeName>
        <fullName>Sep-tRNA:Sec-tRNA synthase</fullName>
        <shortName>SepSecS</shortName>
    </alternativeName>
    <alternativeName>
        <fullName>Soluble liver antigen/liver pancreas antigen-like</fullName>
    </alternativeName>
    <alternativeName>
        <fullName>UGA suppressor tRNA-associated protein homolog</fullName>
    </alternativeName>
</protein>
<dbReference type="EC" id="2.9.1.2" evidence="2"/>
<dbReference type="EMBL" id="BC044561">
    <property type="protein sequence ID" value="AAH44561.1"/>
    <property type="molecule type" value="mRNA"/>
</dbReference>
<dbReference type="RefSeq" id="NP_956448.1">
    <property type="nucleotide sequence ID" value="NM_200154.1"/>
</dbReference>
<dbReference type="SMR" id="Q803A7"/>
<dbReference type="FunCoup" id="Q803A7">
    <property type="interactions" value="583"/>
</dbReference>
<dbReference type="STRING" id="7955.ENSDARP00000042491"/>
<dbReference type="PaxDb" id="7955-ENSDARP00000042491"/>
<dbReference type="GeneID" id="393123"/>
<dbReference type="KEGG" id="dre:393123"/>
<dbReference type="AGR" id="ZFIN:ZDB-GENE-040426-859"/>
<dbReference type="CTD" id="51091"/>
<dbReference type="ZFIN" id="ZDB-GENE-040426-859">
    <property type="gene designation" value="sepsecs"/>
</dbReference>
<dbReference type="eggNOG" id="KOG3843">
    <property type="taxonomic scope" value="Eukaryota"/>
</dbReference>
<dbReference type="InParanoid" id="Q803A7"/>
<dbReference type="OrthoDB" id="10263545at2759"/>
<dbReference type="PhylomeDB" id="Q803A7"/>
<dbReference type="UniPathway" id="UPA00906">
    <property type="reaction ID" value="UER00898"/>
</dbReference>
<dbReference type="PRO" id="PR:Q803A7"/>
<dbReference type="Proteomes" id="UP000000437">
    <property type="component" value="Chromosome 7"/>
</dbReference>
<dbReference type="GO" id="GO:0005737">
    <property type="term" value="C:cytoplasm"/>
    <property type="evidence" value="ECO:0007669"/>
    <property type="project" value="UniProtKB-SubCell"/>
</dbReference>
<dbReference type="GO" id="GO:0098621">
    <property type="term" value="F:O-phosphoseryl-tRNA(Sec) selenium transferase activity"/>
    <property type="evidence" value="ECO:0007669"/>
    <property type="project" value="UniProtKB-EC"/>
</dbReference>
<dbReference type="GO" id="GO:0000049">
    <property type="term" value="F:tRNA binding"/>
    <property type="evidence" value="ECO:0000318"/>
    <property type="project" value="GO_Central"/>
</dbReference>
<dbReference type="GO" id="GO:0001717">
    <property type="term" value="P:conversion of seryl-tRNAsec to selenocys-tRNAsec"/>
    <property type="evidence" value="ECO:0007669"/>
    <property type="project" value="InterPro"/>
</dbReference>
<dbReference type="GO" id="GO:0001514">
    <property type="term" value="P:selenocysteine incorporation"/>
    <property type="evidence" value="ECO:0000318"/>
    <property type="project" value="GO_Central"/>
</dbReference>
<dbReference type="FunFam" id="3.40.640.10:FF:000070">
    <property type="entry name" value="O-phosphoseryl-tRNA(Sec) selenium transferase"/>
    <property type="match status" value="1"/>
</dbReference>
<dbReference type="Gene3D" id="3.40.640.10">
    <property type="entry name" value="Type I PLP-dependent aspartate aminotransferase-like (Major domain)"/>
    <property type="match status" value="1"/>
</dbReference>
<dbReference type="InterPro" id="IPR015424">
    <property type="entry name" value="PyrdxlP-dep_Trfase"/>
</dbReference>
<dbReference type="InterPro" id="IPR015421">
    <property type="entry name" value="PyrdxlP-dep_Trfase_major"/>
</dbReference>
<dbReference type="InterPro" id="IPR019872">
    <property type="entry name" value="Sec-tRNA_Se_transferase"/>
</dbReference>
<dbReference type="InterPro" id="IPR008829">
    <property type="entry name" value="SepSecS/SepCysS"/>
</dbReference>
<dbReference type="NCBIfam" id="TIGR03531">
    <property type="entry name" value="selenium_SpcS"/>
    <property type="match status" value="1"/>
</dbReference>
<dbReference type="PANTHER" id="PTHR12944:SF2">
    <property type="entry name" value="O-PHOSPHOSERYL-TRNA(SEC) SELENIUM TRANSFERASE"/>
    <property type="match status" value="1"/>
</dbReference>
<dbReference type="PANTHER" id="PTHR12944">
    <property type="entry name" value="SOLUBLE LIVER ANTIGEN/LIVER PANCREAS ANTIGEN"/>
    <property type="match status" value="1"/>
</dbReference>
<dbReference type="Pfam" id="PF05889">
    <property type="entry name" value="SepSecS"/>
    <property type="match status" value="1"/>
</dbReference>
<dbReference type="PIRSF" id="PIRSF017689">
    <property type="entry name" value="SepSecS"/>
    <property type="match status" value="1"/>
</dbReference>
<dbReference type="SUPFAM" id="SSF53383">
    <property type="entry name" value="PLP-dependent transferases"/>
    <property type="match status" value="1"/>
</dbReference>
<feature type="chain" id="PRO_0000219878" description="O-phosphoseryl-tRNA(Sec) selenium transferase">
    <location>
        <begin position="1"/>
        <end position="490"/>
    </location>
</feature>
<feature type="region of interest" description="Tetramerization" evidence="2">
    <location>
        <begin position="1"/>
        <end position="44"/>
    </location>
</feature>
<feature type="region of interest" description="Phosphate loop (P-loop)" evidence="2">
    <location>
        <begin position="96"/>
        <end position="106"/>
    </location>
</feature>
<feature type="region of interest" description="Disordered" evidence="3">
    <location>
        <begin position="466"/>
        <end position="490"/>
    </location>
</feature>
<feature type="compositionally biased region" description="Acidic residues" evidence="3">
    <location>
        <begin position="469"/>
        <end position="480"/>
    </location>
</feature>
<feature type="binding site" evidence="2">
    <location>
        <position position="75"/>
    </location>
    <ligand>
        <name>pyridoxal 5'-phosphate</name>
        <dbReference type="ChEBI" id="CHEBI:597326"/>
    </ligand>
</feature>
<feature type="binding site" evidence="2">
    <location>
        <position position="97"/>
    </location>
    <ligand>
        <name>substrate</name>
    </ligand>
</feature>
<feature type="binding site" evidence="2">
    <location>
        <position position="98"/>
    </location>
    <ligand>
        <name>substrate</name>
    </ligand>
</feature>
<feature type="binding site" evidence="2">
    <location>
        <position position="105"/>
    </location>
    <ligand>
        <name>substrate</name>
    </ligand>
</feature>
<feature type="binding site" evidence="2">
    <location>
        <position position="271"/>
    </location>
    <ligand>
        <name>tRNA</name>
        <dbReference type="ChEBI" id="CHEBI:17843"/>
    </ligand>
    <ligandPart>
        <name>tRNA variable arm</name>
    </ligandPart>
</feature>
<feature type="binding site" evidence="2">
    <location>
        <position position="313"/>
    </location>
    <ligand>
        <name>substrate</name>
    </ligand>
</feature>
<feature type="binding site" evidence="2">
    <location>
        <position position="398"/>
    </location>
    <ligand>
        <name>tRNA</name>
        <dbReference type="ChEBI" id="CHEBI:17843"/>
    </ligand>
    <ligandPart>
        <name>tRNA discriminator base</name>
    </ligandPart>
</feature>
<feature type="binding site" evidence="2">
    <location>
        <position position="463"/>
    </location>
    <ligand>
        <name>tRNA</name>
        <dbReference type="ChEBI" id="CHEBI:17843"/>
    </ligand>
    <ligandPart>
        <name>tRNA acceptor arm</name>
    </ligandPart>
</feature>
<feature type="site" description="May act as a substrate filter by repelling compounds with a negatively charged alpha-carboxylate" evidence="1">
    <location>
        <position position="74"/>
    </location>
</feature>
<feature type="modified residue" description="N6-(pyridoxal phosphate)lysine" evidence="2">
    <location>
        <position position="284"/>
    </location>
</feature>
<name>SPCS_DANRE</name>
<accession>Q803A7</accession>
<gene>
    <name type="primary">sepsecs</name>
    <name type="synonym">sla/lpl</name>
    <name type="ORF">zgc:55980</name>
</gene>
<reference key="1">
    <citation type="submission" date="2003-01" db="EMBL/GenBank/DDBJ databases">
        <authorList>
            <consortium name="NIH - Zebrafish Gene Collection (ZGC) project"/>
        </authorList>
    </citation>
    <scope>NUCLEOTIDE SEQUENCE [LARGE SCALE MRNA]</scope>
    <source>
        <strain>AB</strain>
    </source>
</reference>